<comment type="function">
    <text evidence="1">Involved in protein export. Acts as a chaperone by maintaining the newly synthesized protein in an open conformation. Functions as a peptidyl-prolyl cis-trans isomerase.</text>
</comment>
<comment type="catalytic activity">
    <reaction evidence="1">
        <text>[protein]-peptidylproline (omega=180) = [protein]-peptidylproline (omega=0)</text>
        <dbReference type="Rhea" id="RHEA:16237"/>
        <dbReference type="Rhea" id="RHEA-COMP:10747"/>
        <dbReference type="Rhea" id="RHEA-COMP:10748"/>
        <dbReference type="ChEBI" id="CHEBI:83833"/>
        <dbReference type="ChEBI" id="CHEBI:83834"/>
        <dbReference type="EC" id="5.2.1.8"/>
    </reaction>
</comment>
<comment type="subcellular location">
    <subcellularLocation>
        <location>Cytoplasm</location>
    </subcellularLocation>
    <text evidence="1">About half TF is bound to the ribosome near the polypeptide exit tunnel while the other half is free in the cytoplasm.</text>
</comment>
<comment type="domain">
    <text evidence="1">Consists of 3 domains; the N-terminus binds the ribosome, the middle domain has PPIase activity, while the C-terminus has intrinsic chaperone activity on its own.</text>
</comment>
<comment type="similarity">
    <text evidence="1">Belongs to the FKBP-type PPIase family. Tig subfamily.</text>
</comment>
<gene>
    <name evidence="1" type="primary">tig</name>
    <name type="ordered locus">Ctha_1052</name>
</gene>
<protein>
    <recommendedName>
        <fullName evidence="1">Trigger factor</fullName>
        <shortName evidence="1">TF</shortName>
        <ecNumber evidence="1">5.2.1.8</ecNumber>
    </recommendedName>
    <alternativeName>
        <fullName evidence="1">PPIase</fullName>
    </alternativeName>
</protein>
<reference key="1">
    <citation type="submission" date="2008-06" db="EMBL/GenBank/DDBJ databases">
        <title>Complete sequence of Chloroherpeton thalassium ATCC 35110.</title>
        <authorList>
            <consortium name="US DOE Joint Genome Institute"/>
            <person name="Lucas S."/>
            <person name="Copeland A."/>
            <person name="Lapidus A."/>
            <person name="Glavina del Rio T."/>
            <person name="Dalin E."/>
            <person name="Tice H."/>
            <person name="Bruce D."/>
            <person name="Goodwin L."/>
            <person name="Pitluck S."/>
            <person name="Schmutz J."/>
            <person name="Larimer F."/>
            <person name="Land M."/>
            <person name="Hauser L."/>
            <person name="Kyrpides N."/>
            <person name="Mikhailova N."/>
            <person name="Liu Z."/>
            <person name="Li T."/>
            <person name="Zhao F."/>
            <person name="Overmann J."/>
            <person name="Bryant D.A."/>
            <person name="Richardson P."/>
        </authorList>
    </citation>
    <scope>NUCLEOTIDE SEQUENCE [LARGE SCALE GENOMIC DNA]</scope>
    <source>
        <strain>ATCC 35110 / GB-78</strain>
    </source>
</reference>
<dbReference type="EC" id="5.2.1.8" evidence="1"/>
<dbReference type="EMBL" id="CP001100">
    <property type="protein sequence ID" value="ACF13516.1"/>
    <property type="molecule type" value="Genomic_DNA"/>
</dbReference>
<dbReference type="RefSeq" id="WP_012499600.1">
    <property type="nucleotide sequence ID" value="NC_011026.1"/>
</dbReference>
<dbReference type="SMR" id="B3QXY8"/>
<dbReference type="STRING" id="517418.Ctha_1052"/>
<dbReference type="KEGG" id="cts:Ctha_1052"/>
<dbReference type="eggNOG" id="COG0544">
    <property type="taxonomic scope" value="Bacteria"/>
</dbReference>
<dbReference type="HOGENOM" id="CLU_033058_3_0_10"/>
<dbReference type="OrthoDB" id="9767721at2"/>
<dbReference type="Proteomes" id="UP000001208">
    <property type="component" value="Chromosome"/>
</dbReference>
<dbReference type="GO" id="GO:0005737">
    <property type="term" value="C:cytoplasm"/>
    <property type="evidence" value="ECO:0007669"/>
    <property type="project" value="UniProtKB-SubCell"/>
</dbReference>
<dbReference type="GO" id="GO:0003755">
    <property type="term" value="F:peptidyl-prolyl cis-trans isomerase activity"/>
    <property type="evidence" value="ECO:0007669"/>
    <property type="project" value="UniProtKB-UniRule"/>
</dbReference>
<dbReference type="GO" id="GO:0044183">
    <property type="term" value="F:protein folding chaperone"/>
    <property type="evidence" value="ECO:0007669"/>
    <property type="project" value="TreeGrafter"/>
</dbReference>
<dbReference type="GO" id="GO:0043022">
    <property type="term" value="F:ribosome binding"/>
    <property type="evidence" value="ECO:0007669"/>
    <property type="project" value="TreeGrafter"/>
</dbReference>
<dbReference type="GO" id="GO:0051083">
    <property type="term" value="P:'de novo' cotranslational protein folding"/>
    <property type="evidence" value="ECO:0007669"/>
    <property type="project" value="TreeGrafter"/>
</dbReference>
<dbReference type="GO" id="GO:0051301">
    <property type="term" value="P:cell division"/>
    <property type="evidence" value="ECO:0007669"/>
    <property type="project" value="UniProtKB-KW"/>
</dbReference>
<dbReference type="GO" id="GO:0061077">
    <property type="term" value="P:chaperone-mediated protein folding"/>
    <property type="evidence" value="ECO:0007669"/>
    <property type="project" value="TreeGrafter"/>
</dbReference>
<dbReference type="GO" id="GO:0015031">
    <property type="term" value="P:protein transport"/>
    <property type="evidence" value="ECO:0007669"/>
    <property type="project" value="UniProtKB-UniRule"/>
</dbReference>
<dbReference type="GO" id="GO:0043335">
    <property type="term" value="P:protein unfolding"/>
    <property type="evidence" value="ECO:0007669"/>
    <property type="project" value="TreeGrafter"/>
</dbReference>
<dbReference type="Gene3D" id="3.10.50.40">
    <property type="match status" value="1"/>
</dbReference>
<dbReference type="Gene3D" id="3.30.70.1050">
    <property type="entry name" value="Trigger factor ribosome-binding domain"/>
    <property type="match status" value="1"/>
</dbReference>
<dbReference type="Gene3D" id="1.10.3120.10">
    <property type="entry name" value="Trigger factor, C-terminal domain"/>
    <property type="match status" value="1"/>
</dbReference>
<dbReference type="HAMAP" id="MF_00303">
    <property type="entry name" value="Trigger_factor_Tig"/>
    <property type="match status" value="1"/>
</dbReference>
<dbReference type="InterPro" id="IPR046357">
    <property type="entry name" value="PPIase_dom_sf"/>
</dbReference>
<dbReference type="InterPro" id="IPR005215">
    <property type="entry name" value="Trig_fac"/>
</dbReference>
<dbReference type="InterPro" id="IPR008880">
    <property type="entry name" value="Trigger_fac_C"/>
</dbReference>
<dbReference type="InterPro" id="IPR037041">
    <property type="entry name" value="Trigger_fac_C_sf"/>
</dbReference>
<dbReference type="InterPro" id="IPR008881">
    <property type="entry name" value="Trigger_fac_ribosome-bd_bac"/>
</dbReference>
<dbReference type="InterPro" id="IPR036611">
    <property type="entry name" value="Trigger_fac_ribosome-bd_sf"/>
</dbReference>
<dbReference type="InterPro" id="IPR027304">
    <property type="entry name" value="Trigger_fact/SurA_dom_sf"/>
</dbReference>
<dbReference type="NCBIfam" id="TIGR00115">
    <property type="entry name" value="tig"/>
    <property type="match status" value="1"/>
</dbReference>
<dbReference type="PANTHER" id="PTHR30560">
    <property type="entry name" value="TRIGGER FACTOR CHAPERONE AND PEPTIDYL-PROLYL CIS/TRANS ISOMERASE"/>
    <property type="match status" value="1"/>
</dbReference>
<dbReference type="PANTHER" id="PTHR30560:SF3">
    <property type="entry name" value="TRIGGER FACTOR-LIKE PROTEIN TIG, CHLOROPLASTIC"/>
    <property type="match status" value="1"/>
</dbReference>
<dbReference type="Pfam" id="PF05698">
    <property type="entry name" value="Trigger_C"/>
    <property type="match status" value="1"/>
</dbReference>
<dbReference type="Pfam" id="PF05697">
    <property type="entry name" value="Trigger_N"/>
    <property type="match status" value="1"/>
</dbReference>
<dbReference type="PIRSF" id="PIRSF003095">
    <property type="entry name" value="Trigger_factor"/>
    <property type="match status" value="1"/>
</dbReference>
<dbReference type="SUPFAM" id="SSF54534">
    <property type="entry name" value="FKBP-like"/>
    <property type="match status" value="1"/>
</dbReference>
<dbReference type="SUPFAM" id="SSF109998">
    <property type="entry name" value="Triger factor/SurA peptide-binding domain-like"/>
    <property type="match status" value="1"/>
</dbReference>
<dbReference type="SUPFAM" id="SSF102735">
    <property type="entry name" value="Trigger factor ribosome-binding domain"/>
    <property type="match status" value="1"/>
</dbReference>
<proteinExistence type="inferred from homology"/>
<evidence type="ECO:0000255" key="1">
    <source>
        <dbReference type="HAMAP-Rule" id="MF_00303"/>
    </source>
</evidence>
<organism>
    <name type="scientific">Chloroherpeton thalassium (strain ATCC 35110 / GB-78)</name>
    <dbReference type="NCBI Taxonomy" id="517418"/>
    <lineage>
        <taxon>Bacteria</taxon>
        <taxon>Pseudomonadati</taxon>
        <taxon>Chlorobiota</taxon>
        <taxon>Chlorobiia</taxon>
        <taxon>Chlorobiales</taxon>
        <taxon>Chloroherpetonaceae</taxon>
        <taxon>Chloroherpeton</taxon>
    </lineage>
</organism>
<feature type="chain" id="PRO_1000115518" description="Trigger factor">
    <location>
        <begin position="1"/>
        <end position="431"/>
    </location>
</feature>
<feature type="domain" description="PPIase FKBP-type" evidence="1">
    <location>
        <begin position="161"/>
        <end position="245"/>
    </location>
</feature>
<accession>B3QXY8</accession>
<name>TIG_CHLT3</name>
<sequence length="431" mass="49696">MESKFKQLSDTEQELEISFSPDEFQPELDKQYKLAQAKAHLKGFRKGKAPLQMIKKMLGRDIQYQVVEELAGKNFESVAKENDLKLVGQAKIRHYELAENEKLSIYLIYEVHPAFELKPFNEYEFKKAEYQVSDETVEKELKKLLQSKGNMVAVEGAAAPTDIVIGDVQKLDADGTAIVGERQENQSFRLEYMKDDSPFFTALNGVNKGEERRVEVEVKEEDVPEENKKQTFLISVKEIKRMELPELTDELVKELSRGKNETVQDFRDELRKQIEAYFTNKSEEDLMESVAQKFLEENVFTAPSSLIKMYEDMLLDNAKRQIGGAFPPGFDETYYRAEIRPNAEKHARWMLIRNKIAELNGIEVSDDDIKALAEKEAKLTGAEATEEFVNTYFSEQYKPYVIDTLLRDKIYEFIKANTKIEVESKLPEAAV</sequence>
<keyword id="KW-0131">Cell cycle</keyword>
<keyword id="KW-0132">Cell division</keyword>
<keyword id="KW-0143">Chaperone</keyword>
<keyword id="KW-0963">Cytoplasm</keyword>
<keyword id="KW-0413">Isomerase</keyword>
<keyword id="KW-1185">Reference proteome</keyword>
<keyword id="KW-0697">Rotamase</keyword>